<name>MAP2_HUMAN</name>
<gene>
    <name evidence="2" type="primary">METAP2</name>
    <name type="synonym">MNPEP</name>
    <name type="synonym">P67EIF2</name>
</gene>
<reference key="1">
    <citation type="journal article" date="1995" name="Proc. Natl. Acad. Sci. U.S.A.">
        <title>Eukaryotic methionyl aminopeptidases: two classes of cobalt-dependent enzymes.</title>
        <authorList>
            <person name="Arfin S.M."/>
            <person name="Kendall R.L."/>
            <person name="Hall L."/>
            <person name="Weaver L.H."/>
            <person name="Stewart A.E."/>
            <person name="Matthews B.W."/>
            <person name="Bradshaw R.A."/>
        </authorList>
    </citation>
    <scope>NUCLEOTIDE SEQUENCE [MRNA] (ISOFORM 1)</scope>
    <source>
        <tissue>Brain</tissue>
    </source>
</reference>
<reference key="2">
    <citation type="journal article" date="1995" name="Biochim. Biophys. Acta">
        <title>Molecular cloning of a human complementary DNA encoding an initiation factor 2-associated protein (p67).</title>
        <authorList>
            <person name="Li X."/>
            <person name="Chang Y."/>
        </authorList>
    </citation>
    <scope>NUCLEOTIDE SEQUENCE [MRNA] (ISOFORM 1)</scope>
    <source>
        <tissue>Liver</tissue>
    </source>
</reference>
<reference key="3">
    <citation type="journal article" date="2004" name="Nat. Genet.">
        <title>Complete sequencing and characterization of 21,243 full-length human cDNAs.</title>
        <authorList>
            <person name="Ota T."/>
            <person name="Suzuki Y."/>
            <person name="Nishikawa T."/>
            <person name="Otsuki T."/>
            <person name="Sugiyama T."/>
            <person name="Irie R."/>
            <person name="Wakamatsu A."/>
            <person name="Hayashi K."/>
            <person name="Sato H."/>
            <person name="Nagai K."/>
            <person name="Kimura K."/>
            <person name="Makita H."/>
            <person name="Sekine M."/>
            <person name="Obayashi M."/>
            <person name="Nishi T."/>
            <person name="Shibahara T."/>
            <person name="Tanaka T."/>
            <person name="Ishii S."/>
            <person name="Yamamoto J."/>
            <person name="Saito K."/>
            <person name="Kawai Y."/>
            <person name="Isono Y."/>
            <person name="Nakamura Y."/>
            <person name="Nagahari K."/>
            <person name="Murakami K."/>
            <person name="Yasuda T."/>
            <person name="Iwayanagi T."/>
            <person name="Wagatsuma M."/>
            <person name="Shiratori A."/>
            <person name="Sudo H."/>
            <person name="Hosoiri T."/>
            <person name="Kaku Y."/>
            <person name="Kodaira H."/>
            <person name="Kondo H."/>
            <person name="Sugawara M."/>
            <person name="Takahashi M."/>
            <person name="Kanda K."/>
            <person name="Yokoi T."/>
            <person name="Furuya T."/>
            <person name="Kikkawa E."/>
            <person name="Omura Y."/>
            <person name="Abe K."/>
            <person name="Kamihara K."/>
            <person name="Katsuta N."/>
            <person name="Sato K."/>
            <person name="Tanikawa M."/>
            <person name="Yamazaki M."/>
            <person name="Ninomiya K."/>
            <person name="Ishibashi T."/>
            <person name="Yamashita H."/>
            <person name="Murakawa K."/>
            <person name="Fujimori K."/>
            <person name="Tanai H."/>
            <person name="Kimata M."/>
            <person name="Watanabe M."/>
            <person name="Hiraoka S."/>
            <person name="Chiba Y."/>
            <person name="Ishida S."/>
            <person name="Ono Y."/>
            <person name="Takiguchi S."/>
            <person name="Watanabe S."/>
            <person name="Yosida M."/>
            <person name="Hotuta T."/>
            <person name="Kusano J."/>
            <person name="Kanehori K."/>
            <person name="Takahashi-Fujii A."/>
            <person name="Hara H."/>
            <person name="Tanase T.-O."/>
            <person name="Nomura Y."/>
            <person name="Togiya S."/>
            <person name="Komai F."/>
            <person name="Hara R."/>
            <person name="Takeuchi K."/>
            <person name="Arita M."/>
            <person name="Imose N."/>
            <person name="Musashino K."/>
            <person name="Yuuki H."/>
            <person name="Oshima A."/>
            <person name="Sasaki N."/>
            <person name="Aotsuka S."/>
            <person name="Yoshikawa Y."/>
            <person name="Matsunawa H."/>
            <person name="Ichihara T."/>
            <person name="Shiohata N."/>
            <person name="Sano S."/>
            <person name="Moriya S."/>
            <person name="Momiyama H."/>
            <person name="Satoh N."/>
            <person name="Takami S."/>
            <person name="Terashima Y."/>
            <person name="Suzuki O."/>
            <person name="Nakagawa S."/>
            <person name="Senoh A."/>
            <person name="Mizoguchi H."/>
            <person name="Goto Y."/>
            <person name="Shimizu F."/>
            <person name="Wakebe H."/>
            <person name="Hishigaki H."/>
            <person name="Watanabe T."/>
            <person name="Sugiyama A."/>
            <person name="Takemoto M."/>
            <person name="Kawakami B."/>
            <person name="Yamazaki M."/>
            <person name="Watanabe K."/>
            <person name="Kumagai A."/>
            <person name="Itakura S."/>
            <person name="Fukuzumi Y."/>
            <person name="Fujimori Y."/>
            <person name="Komiyama M."/>
            <person name="Tashiro H."/>
            <person name="Tanigami A."/>
            <person name="Fujiwara T."/>
            <person name="Ono T."/>
            <person name="Yamada K."/>
            <person name="Fujii Y."/>
            <person name="Ozaki K."/>
            <person name="Hirao M."/>
            <person name="Ohmori Y."/>
            <person name="Kawabata A."/>
            <person name="Hikiji T."/>
            <person name="Kobatake N."/>
            <person name="Inagaki H."/>
            <person name="Ikema Y."/>
            <person name="Okamoto S."/>
            <person name="Okitani R."/>
            <person name="Kawakami T."/>
            <person name="Noguchi S."/>
            <person name="Itoh T."/>
            <person name="Shigeta K."/>
            <person name="Senba T."/>
            <person name="Matsumura K."/>
            <person name="Nakajima Y."/>
            <person name="Mizuno T."/>
            <person name="Morinaga M."/>
            <person name="Sasaki M."/>
            <person name="Togashi T."/>
            <person name="Oyama M."/>
            <person name="Hata H."/>
            <person name="Watanabe M."/>
            <person name="Komatsu T."/>
            <person name="Mizushima-Sugano J."/>
            <person name="Satoh T."/>
            <person name="Shirai Y."/>
            <person name="Takahashi Y."/>
            <person name="Nakagawa K."/>
            <person name="Okumura K."/>
            <person name="Nagase T."/>
            <person name="Nomura N."/>
            <person name="Kikuchi H."/>
            <person name="Masuho Y."/>
            <person name="Yamashita R."/>
            <person name="Nakai K."/>
            <person name="Yada T."/>
            <person name="Nakamura Y."/>
            <person name="Ohara O."/>
            <person name="Isogai T."/>
            <person name="Sugano S."/>
        </authorList>
    </citation>
    <scope>NUCLEOTIDE SEQUENCE [LARGE SCALE MRNA] (ISOFORMS 1; 2 AND 3)</scope>
    <source>
        <tissue>Heart</tissue>
        <tissue>Placenta</tissue>
        <tissue>Small intestine</tissue>
    </source>
</reference>
<reference key="4">
    <citation type="journal article" date="2006" name="Nature">
        <title>The finished DNA sequence of human chromosome 12.</title>
        <authorList>
            <person name="Scherer S.E."/>
            <person name="Muzny D.M."/>
            <person name="Buhay C.J."/>
            <person name="Chen R."/>
            <person name="Cree A."/>
            <person name="Ding Y."/>
            <person name="Dugan-Rocha S."/>
            <person name="Gill R."/>
            <person name="Gunaratne P."/>
            <person name="Harris R.A."/>
            <person name="Hawes A.C."/>
            <person name="Hernandez J."/>
            <person name="Hodgson A.V."/>
            <person name="Hume J."/>
            <person name="Jackson A."/>
            <person name="Khan Z.M."/>
            <person name="Kovar-Smith C."/>
            <person name="Lewis L.R."/>
            <person name="Lozado R.J."/>
            <person name="Metzker M.L."/>
            <person name="Milosavljevic A."/>
            <person name="Miner G.R."/>
            <person name="Montgomery K.T."/>
            <person name="Morgan M.B."/>
            <person name="Nazareth L.V."/>
            <person name="Scott G."/>
            <person name="Sodergren E."/>
            <person name="Song X.-Z."/>
            <person name="Steffen D."/>
            <person name="Lovering R.C."/>
            <person name="Wheeler D.A."/>
            <person name="Worley K.C."/>
            <person name="Yuan Y."/>
            <person name="Zhang Z."/>
            <person name="Adams C.Q."/>
            <person name="Ansari-Lari M.A."/>
            <person name="Ayele M."/>
            <person name="Brown M.J."/>
            <person name="Chen G."/>
            <person name="Chen Z."/>
            <person name="Clerc-Blankenburg K.P."/>
            <person name="Davis C."/>
            <person name="Delgado O."/>
            <person name="Dinh H.H."/>
            <person name="Draper H."/>
            <person name="Gonzalez-Garay M.L."/>
            <person name="Havlak P."/>
            <person name="Jackson L.R."/>
            <person name="Jacob L.S."/>
            <person name="Kelly S.H."/>
            <person name="Li L."/>
            <person name="Li Z."/>
            <person name="Liu J."/>
            <person name="Liu W."/>
            <person name="Lu J."/>
            <person name="Maheshwari M."/>
            <person name="Nguyen B.-V."/>
            <person name="Okwuonu G.O."/>
            <person name="Pasternak S."/>
            <person name="Perez L.M."/>
            <person name="Plopper F.J.H."/>
            <person name="Santibanez J."/>
            <person name="Shen H."/>
            <person name="Tabor P.E."/>
            <person name="Verduzco D."/>
            <person name="Waldron L."/>
            <person name="Wang Q."/>
            <person name="Williams G.A."/>
            <person name="Zhang J."/>
            <person name="Zhou J."/>
            <person name="Allen C.C."/>
            <person name="Amin A.G."/>
            <person name="Anyalebechi V."/>
            <person name="Bailey M."/>
            <person name="Barbaria J.A."/>
            <person name="Bimage K.E."/>
            <person name="Bryant N.P."/>
            <person name="Burch P.E."/>
            <person name="Burkett C.E."/>
            <person name="Burrell K.L."/>
            <person name="Calderon E."/>
            <person name="Cardenas V."/>
            <person name="Carter K."/>
            <person name="Casias K."/>
            <person name="Cavazos I."/>
            <person name="Cavazos S.R."/>
            <person name="Ceasar H."/>
            <person name="Chacko J."/>
            <person name="Chan S.N."/>
            <person name="Chavez D."/>
            <person name="Christopoulos C."/>
            <person name="Chu J."/>
            <person name="Cockrell R."/>
            <person name="Cox C.D."/>
            <person name="Dang M."/>
            <person name="Dathorne S.R."/>
            <person name="David R."/>
            <person name="Davis C.M."/>
            <person name="Davy-Carroll L."/>
            <person name="Deshazo D.R."/>
            <person name="Donlin J.E."/>
            <person name="D'Souza L."/>
            <person name="Eaves K.A."/>
            <person name="Egan A."/>
            <person name="Emery-Cohen A.J."/>
            <person name="Escotto M."/>
            <person name="Flagg N."/>
            <person name="Forbes L.D."/>
            <person name="Gabisi A.M."/>
            <person name="Garza M."/>
            <person name="Hamilton C."/>
            <person name="Henderson N."/>
            <person name="Hernandez O."/>
            <person name="Hines S."/>
            <person name="Hogues M.E."/>
            <person name="Huang M."/>
            <person name="Idlebird D.G."/>
            <person name="Johnson R."/>
            <person name="Jolivet A."/>
            <person name="Jones S."/>
            <person name="Kagan R."/>
            <person name="King L.M."/>
            <person name="Leal B."/>
            <person name="Lebow H."/>
            <person name="Lee S."/>
            <person name="LeVan J.M."/>
            <person name="Lewis L.C."/>
            <person name="London P."/>
            <person name="Lorensuhewa L.M."/>
            <person name="Loulseged H."/>
            <person name="Lovett D.A."/>
            <person name="Lucier A."/>
            <person name="Lucier R.L."/>
            <person name="Ma J."/>
            <person name="Madu R.C."/>
            <person name="Mapua P."/>
            <person name="Martindale A.D."/>
            <person name="Martinez E."/>
            <person name="Massey E."/>
            <person name="Mawhiney S."/>
            <person name="Meador M.G."/>
            <person name="Mendez S."/>
            <person name="Mercado C."/>
            <person name="Mercado I.C."/>
            <person name="Merritt C.E."/>
            <person name="Miner Z.L."/>
            <person name="Minja E."/>
            <person name="Mitchell T."/>
            <person name="Mohabbat F."/>
            <person name="Mohabbat K."/>
            <person name="Montgomery B."/>
            <person name="Moore N."/>
            <person name="Morris S."/>
            <person name="Munidasa M."/>
            <person name="Ngo R.N."/>
            <person name="Nguyen N.B."/>
            <person name="Nickerson E."/>
            <person name="Nwaokelemeh O.O."/>
            <person name="Nwokenkwo S."/>
            <person name="Obregon M."/>
            <person name="Oguh M."/>
            <person name="Oragunye N."/>
            <person name="Oviedo R.J."/>
            <person name="Parish B.J."/>
            <person name="Parker D.N."/>
            <person name="Parrish J."/>
            <person name="Parks K.L."/>
            <person name="Paul H.A."/>
            <person name="Payton B.A."/>
            <person name="Perez A."/>
            <person name="Perrin W."/>
            <person name="Pickens A."/>
            <person name="Primus E.L."/>
            <person name="Pu L.-L."/>
            <person name="Puazo M."/>
            <person name="Quiles M.M."/>
            <person name="Quiroz J.B."/>
            <person name="Rabata D."/>
            <person name="Reeves K."/>
            <person name="Ruiz S.J."/>
            <person name="Shao H."/>
            <person name="Sisson I."/>
            <person name="Sonaike T."/>
            <person name="Sorelle R.P."/>
            <person name="Sutton A.E."/>
            <person name="Svatek A.F."/>
            <person name="Svetz L.A."/>
            <person name="Tamerisa K.S."/>
            <person name="Taylor T.R."/>
            <person name="Teague B."/>
            <person name="Thomas N."/>
            <person name="Thorn R.D."/>
            <person name="Trejos Z.Y."/>
            <person name="Trevino B.K."/>
            <person name="Ukegbu O.N."/>
            <person name="Urban J.B."/>
            <person name="Vasquez L.I."/>
            <person name="Vera V.A."/>
            <person name="Villasana D.M."/>
            <person name="Wang L."/>
            <person name="Ward-Moore S."/>
            <person name="Warren J.T."/>
            <person name="Wei X."/>
            <person name="White F."/>
            <person name="Williamson A.L."/>
            <person name="Wleczyk R."/>
            <person name="Wooden H.S."/>
            <person name="Wooden S.H."/>
            <person name="Yen J."/>
            <person name="Yoon L."/>
            <person name="Yoon V."/>
            <person name="Zorrilla S.E."/>
            <person name="Nelson D."/>
            <person name="Kucherlapati R."/>
            <person name="Weinstock G."/>
            <person name="Gibbs R.A."/>
        </authorList>
    </citation>
    <scope>NUCLEOTIDE SEQUENCE [LARGE SCALE GENOMIC DNA]</scope>
</reference>
<reference key="5">
    <citation type="submission" date="2005-07" db="EMBL/GenBank/DDBJ databases">
        <authorList>
            <person name="Mural R.J."/>
            <person name="Istrail S."/>
            <person name="Sutton G.G."/>
            <person name="Florea L."/>
            <person name="Halpern A.L."/>
            <person name="Mobarry C.M."/>
            <person name="Lippert R."/>
            <person name="Walenz B."/>
            <person name="Shatkay H."/>
            <person name="Dew I."/>
            <person name="Miller J.R."/>
            <person name="Flanigan M.J."/>
            <person name="Edwards N.J."/>
            <person name="Bolanos R."/>
            <person name="Fasulo D."/>
            <person name="Halldorsson B.V."/>
            <person name="Hannenhalli S."/>
            <person name="Turner R."/>
            <person name="Yooseph S."/>
            <person name="Lu F."/>
            <person name="Nusskern D.R."/>
            <person name="Shue B.C."/>
            <person name="Zheng X.H."/>
            <person name="Zhong F."/>
            <person name="Delcher A.L."/>
            <person name="Huson D.H."/>
            <person name="Kravitz S.A."/>
            <person name="Mouchard L."/>
            <person name="Reinert K."/>
            <person name="Remington K.A."/>
            <person name="Clark A.G."/>
            <person name="Waterman M.S."/>
            <person name="Eichler E.E."/>
            <person name="Adams M.D."/>
            <person name="Hunkapiller M.W."/>
            <person name="Myers E.W."/>
            <person name="Venter J.C."/>
        </authorList>
    </citation>
    <scope>NUCLEOTIDE SEQUENCE [LARGE SCALE GENOMIC DNA]</scope>
</reference>
<reference key="6">
    <citation type="journal article" date="2004" name="Genome Res.">
        <title>The status, quality, and expansion of the NIH full-length cDNA project: the Mammalian Gene Collection (MGC).</title>
        <authorList>
            <consortium name="The MGC Project Team"/>
        </authorList>
    </citation>
    <scope>NUCLEOTIDE SEQUENCE [LARGE SCALE MRNA] (ISOFORM 1)</scope>
    <source>
        <tissue>Lymph</tissue>
    </source>
</reference>
<reference key="7">
    <citation type="journal article" date="1989" name="J. Biol. Chem.">
        <title>Glycosylation of eukaryotic peptide chain initiation factor 2 (eIF-2)-associated 67-kDa polypeptide (p67) and its possible role in the inhibition of eIF-2 kinase-catalyzed phosphorylation of the eIF-2 alpha-subunit.</title>
        <authorList>
            <person name="Datta B."/>
            <person name="Ray M.K."/>
            <person name="Chakrabarti D."/>
            <person name="Wylie D.E."/>
            <person name="Gupta N.K."/>
        </authorList>
    </citation>
    <scope>FUNCTION IN EIF2S1 PROTECTION</scope>
    <scope>GLYCOSYLATION</scope>
</reference>
<reference key="8">
    <citation type="journal article" date="2003" name="Biochemistry">
        <title>Physiologically relevant metal cofactor for methionine aminopeptidase-2 is manganese.</title>
        <authorList>
            <person name="Wang J."/>
            <person name="Sheppard G.S."/>
            <person name="Lou P."/>
            <person name="Kawai M."/>
            <person name="Park C."/>
            <person name="Egan D.A."/>
            <person name="Schneider A."/>
            <person name="Bouska J."/>
            <person name="Lesniewski R."/>
            <person name="Henkin J."/>
        </authorList>
    </citation>
    <scope>COFACTOR</scope>
</reference>
<reference key="9">
    <citation type="journal article" date="2008" name="Proc. Natl. Acad. Sci. U.S.A.">
        <title>A quantitative atlas of mitotic phosphorylation.</title>
        <authorList>
            <person name="Dephoure N."/>
            <person name="Zhou C."/>
            <person name="Villen J."/>
            <person name="Beausoleil S.A."/>
            <person name="Bakalarski C.E."/>
            <person name="Elledge S.J."/>
            <person name="Gygi S.P."/>
        </authorList>
    </citation>
    <scope>PHOSPHORYLATION [LARGE SCALE ANALYSIS] AT SER-45; SER-60; SER-63 AND SER-74</scope>
    <scope>IDENTIFICATION BY MASS SPECTROMETRY [LARGE SCALE ANALYSIS]</scope>
    <source>
        <tissue>Cervix carcinoma</tissue>
    </source>
</reference>
<reference key="10">
    <citation type="journal article" date="2009" name="Anal. Chem.">
        <title>Lys-N and trypsin cover complementary parts of the phosphoproteome in a refined SCX-based approach.</title>
        <authorList>
            <person name="Gauci S."/>
            <person name="Helbig A.O."/>
            <person name="Slijper M."/>
            <person name="Krijgsveld J."/>
            <person name="Heck A.J."/>
            <person name="Mohammed S."/>
        </authorList>
    </citation>
    <scope>ACETYLATION [LARGE SCALE ANALYSIS] AT ALA-2</scope>
    <scope>CLEAVAGE OF INITIATOR METHIONINE [LARGE SCALE ANALYSIS]</scope>
    <scope>IDENTIFICATION BY MASS SPECTROMETRY [LARGE SCALE ANALYSIS]</scope>
</reference>
<reference key="11">
    <citation type="journal article" date="2010" name="Biochemistry">
        <title>Protein N-terminal processing: substrate specificity of Escherichia coli and human methionine aminopeptidases.</title>
        <authorList>
            <person name="Xiao Q."/>
            <person name="Zhang F."/>
            <person name="Nacev B.A."/>
            <person name="Liu J.O."/>
            <person name="Pei D."/>
        </authorList>
    </citation>
    <scope>FUNCTION</scope>
    <scope>CATALYTIC ACTIVITY</scope>
</reference>
<reference key="12">
    <citation type="journal article" date="2010" name="Sci. Signal.">
        <title>Quantitative phosphoproteomics reveals widespread full phosphorylation site occupancy during mitosis.</title>
        <authorList>
            <person name="Olsen J.V."/>
            <person name="Vermeulen M."/>
            <person name="Santamaria A."/>
            <person name="Kumar C."/>
            <person name="Miller M.L."/>
            <person name="Jensen L.J."/>
            <person name="Gnad F."/>
            <person name="Cox J."/>
            <person name="Jensen T.S."/>
            <person name="Nigg E.A."/>
            <person name="Brunak S."/>
            <person name="Mann M."/>
        </authorList>
    </citation>
    <scope>PHOSPHORYLATION [LARGE SCALE ANALYSIS] AT SER-45 AND SER-74</scope>
    <scope>IDENTIFICATION BY MASS SPECTROMETRY [LARGE SCALE ANALYSIS]</scope>
    <source>
        <tissue>Cervix carcinoma</tissue>
    </source>
</reference>
<reference key="13">
    <citation type="journal article" date="2010" name="World J. Biol. Chem.">
        <title>Localization and function of a eukaryotic-initiation-factor-2-associated 67-kDa glycoprotein.</title>
        <authorList>
            <person name="Wu S."/>
        </authorList>
    </citation>
    <scope>SUBCELLULAR LOCATION</scope>
</reference>
<reference key="14">
    <citation type="journal article" date="2011" name="BMC Syst. Biol.">
        <title>Initial characterization of the human central proteome.</title>
        <authorList>
            <person name="Burkard T.R."/>
            <person name="Planyavsky M."/>
            <person name="Kaupe I."/>
            <person name="Breitwieser F.P."/>
            <person name="Buerckstuemmer T."/>
            <person name="Bennett K.L."/>
            <person name="Superti-Furga G."/>
            <person name="Colinge J."/>
        </authorList>
    </citation>
    <scope>IDENTIFICATION BY MASS SPECTROMETRY [LARGE SCALE ANALYSIS]</scope>
</reference>
<reference key="15">
    <citation type="journal article" date="2013" name="J. Proteome Res.">
        <title>Toward a comprehensive characterization of a human cancer cell phosphoproteome.</title>
        <authorList>
            <person name="Zhou H."/>
            <person name="Di Palma S."/>
            <person name="Preisinger C."/>
            <person name="Peng M."/>
            <person name="Polat A.N."/>
            <person name="Heck A.J."/>
            <person name="Mohammed S."/>
        </authorList>
    </citation>
    <scope>PHOSPHORYLATION [LARGE SCALE ANALYSIS] AT SER-45; SER-63 AND SER-74</scope>
    <scope>IDENTIFICATION BY MASS SPECTROMETRY [LARGE SCALE ANALYSIS]</scope>
    <source>
        <tissue>Cervix carcinoma</tissue>
    </source>
</reference>
<reference key="16">
    <citation type="journal article" date="2014" name="J. Proteomics">
        <title>An enzyme assisted RP-RPLC approach for in-depth analysis of human liver phosphoproteome.</title>
        <authorList>
            <person name="Bian Y."/>
            <person name="Song C."/>
            <person name="Cheng K."/>
            <person name="Dong M."/>
            <person name="Wang F."/>
            <person name="Huang J."/>
            <person name="Sun D."/>
            <person name="Wang L."/>
            <person name="Ye M."/>
            <person name="Zou H."/>
        </authorList>
    </citation>
    <scope>IDENTIFICATION BY MASS SPECTROMETRY [LARGE SCALE ANALYSIS]</scope>
    <source>
        <tissue>Liver</tissue>
    </source>
</reference>
<reference key="17">
    <citation type="journal article" date="1998" name="Science">
        <title>Structure of human methionine aminopeptidase-2 complexed with fumagillin.</title>
        <authorList>
            <person name="Liu S."/>
            <person name="Widom J."/>
            <person name="Kemp C.W."/>
            <person name="Crews C.M."/>
            <person name="Clardy J."/>
        </authorList>
    </citation>
    <scope>X-RAY CRYSTALLOGRAPHY (1.6 ANGSTROMS) IN COMPLEX WITH FUMAGILLIN</scope>
    <scope>COFACTOR</scope>
</reference>
<reference key="18">
    <citation type="journal article" date="2003" name="J. Biol. Chem.">
        <title>Proteomics-based target identification: bengamides as a new class of methionine aminopeptidase inhibitors.</title>
        <authorList>
            <person name="Towbin H."/>
            <person name="Bair K.W."/>
            <person name="DeCaprio J.A."/>
            <person name="Eck M.J."/>
            <person name="Kim S."/>
            <person name="Kinder F.R."/>
            <person name="Morollo A."/>
            <person name="Mueller D.R."/>
            <person name="Schindler P."/>
            <person name="Song H.K."/>
            <person name="van Oostrum J."/>
            <person name="Versace R.W."/>
            <person name="Voshol H."/>
            <person name="Wood J."/>
            <person name="Zabludoff S."/>
            <person name="Phillips P.E."/>
        </authorList>
    </citation>
    <scope>X-RAY CRYSTALLOGRAPHY (1.6 ANGSTROMS) IN COMPLEX WITH COBALT IONS AND BENGAMIDE</scope>
    <scope>FUNCTION</scope>
</reference>
<reference key="19">
    <citation type="journal article" date="2004" name="Bioorg. Med. Chem. Lett.">
        <title>3-amino-2-hydroxyamides and related compounds as inhibitors of methionine aminopeptidase-2.</title>
        <authorList>
            <person name="Sheppard G.S."/>
            <person name="Wang J."/>
            <person name="Kawai M."/>
            <person name="BaMaung N.Y."/>
            <person name="Craig R.A."/>
            <person name="Erickson S.A."/>
            <person name="Lynch L."/>
            <person name="Patel J."/>
            <person name="Yang F."/>
            <person name="Searle X.B."/>
            <person name="Lou P."/>
            <person name="Park C."/>
            <person name="Kim K.H."/>
            <person name="Henkin J."/>
            <person name="Lesniewski R."/>
        </authorList>
    </citation>
    <scope>X-RAY CRYSTALLOGRAPHY (1.9 ANGSTROMS) OF 110-478 IN COMPLEX WITH INHIBITOR A-357300</scope>
</reference>
<reference key="20">
    <citation type="journal article" date="2005" name="J. Med. Chem.">
        <title>4-aryl-1,2,3-triazole: a novel template for a reversible methionine aminopeptidase 2 inhibitor, optimized to inhibit angiogenesis in vivo.</title>
        <authorList>
            <person name="Kallander L.S."/>
            <person name="Lu Q."/>
            <person name="Chen W."/>
            <person name="Tomaszek T."/>
            <person name="Yang G."/>
            <person name="Tew D."/>
            <person name="Meek T.D."/>
            <person name="Hofmann G.A."/>
            <person name="Schulz-Pritchard C.K."/>
            <person name="Smith W.W."/>
            <person name="Janson C.A."/>
            <person name="Ryan M.D."/>
            <person name="Zhang G.-F."/>
            <person name="Johanson K.O."/>
            <person name="Kirkpatrick R.B."/>
            <person name="Ho T.F."/>
            <person name="Fisher P.W."/>
            <person name="Mattern M.R."/>
            <person name="Johnson R.K."/>
            <person name="Hansbury M.J."/>
            <person name="Winkler J.D."/>
            <person name="Ward K.W."/>
            <person name="Veber D.F."/>
            <person name="Thompson S.K."/>
        </authorList>
    </citation>
    <scope>X-RAY CRYSTALLOGRAPHY (1.9 ANGSTROMS) OF 110-478 IN COMPLEX WITH 4-ARYL-1,2,3-TRIAZOLE AND COBALT IONS</scope>
</reference>
<reference key="21">
    <citation type="journal article" date="2006" name="Bioorg. Med. Chem. Lett.">
        <title>Human methionine aminopeptidase type 2 in complex with L- and D-methionine.</title>
        <authorList>
            <person name="Nonato M.C."/>
            <person name="Widom J."/>
            <person name="Clardy J."/>
        </authorList>
    </citation>
    <scope>X-RAY CRYSTALLOGRAPHY (1.9 ANGSTROMS) IN COMPLEXES WITH ZINC IONS AND METHIONINE</scope>
    <scope>PARTIAL PROTEIN SEQUENCE</scope>
</reference>
<reference key="22">
    <citation type="journal article" date="2007" name="Bioorg. Med. Chem. Lett.">
        <title>Lead optimization of methionine aminopeptidase-2 (MetAP2) inhibitors containing sulfonamides of 5,6-disubstituted anthranilic acids.</title>
        <authorList>
            <person name="Wang G.T."/>
            <person name="Mantei R.A."/>
            <person name="Kawai M."/>
            <person name="Tedrow J.S."/>
            <person name="Barnes D.M."/>
            <person name="Wang J."/>
            <person name="Zhang Q."/>
            <person name="Lou P."/>
            <person name="Garcia L.A."/>
            <person name="Bouska J."/>
            <person name="Yates M."/>
            <person name="Park C."/>
            <person name="Judge R.A."/>
            <person name="Lesniewski R."/>
            <person name="Sheppard G.S."/>
            <person name="Bell R.L."/>
        </authorList>
    </citation>
    <scope>X-RAY CRYSTALLOGRAPHY (2.35 ANGSTROMS) OF 110-478 IN COMPLEX WITH MANGANESE AND INHIBITOR</scope>
</reference>
<reference key="23">
    <citation type="journal article" date="2007" name="J. Med. Chem.">
        <title>Highly potent inhibitors of methionine aminopeptidase-2 based on a 1,2,4-triazole pharmacophore.</title>
        <authorList>
            <person name="Marino J.P. Jr."/>
            <person name="Fisher P.W."/>
            <person name="Hofmann G.A."/>
            <person name="Kirkpatrick R.B."/>
            <person name="Janson C.A."/>
            <person name="Johnson R.K."/>
            <person name="Ma C."/>
            <person name="Mattern M."/>
            <person name="Meek T.D."/>
            <person name="Ryan M.D."/>
            <person name="Schulz C."/>
            <person name="Smith W.W."/>
            <person name="Tew D.G."/>
            <person name="Tomazek T.A. Jr."/>
            <person name="Veber D.F."/>
            <person name="Xiong W.C."/>
            <person name="Yamamoto Y."/>
            <person name="Yamashita K."/>
            <person name="Yang G."/>
            <person name="Thompson S.K."/>
        </authorList>
    </citation>
    <scope>X-RAY CRYSTALLOGRAPHY (1.9 ANGSTROMS) OF 110-478 IN COMPLEX WITH COBALT IONS AND INHIBITOR</scope>
    <scope>COFACTOR</scope>
    <scope>FUNCTION</scope>
</reference>
<accession>P50579</accession>
<accession>B2RDI8</accession>
<accession>B4DUX5</accession>
<accession>G3XA91</accession>
<accession>Q8NB11</accession>
<evidence type="ECO:0000250" key="1"/>
<evidence type="ECO:0000255" key="2">
    <source>
        <dbReference type="HAMAP-Rule" id="MF_03175"/>
    </source>
</evidence>
<evidence type="ECO:0000256" key="3">
    <source>
        <dbReference type="SAM" id="MobiDB-lite"/>
    </source>
</evidence>
<evidence type="ECO:0000269" key="4">
    <source>
    </source>
</evidence>
<evidence type="ECO:0000269" key="5">
    <source>
    </source>
</evidence>
<evidence type="ECO:0000269" key="6">
    <source>
    </source>
</evidence>
<evidence type="ECO:0000269" key="7">
    <source>
    </source>
</evidence>
<evidence type="ECO:0000269" key="8">
    <source>
    </source>
</evidence>
<evidence type="ECO:0000269" key="9">
    <source>
    </source>
</evidence>
<evidence type="ECO:0000269" key="10">
    <source>
    </source>
</evidence>
<evidence type="ECO:0000269" key="11">
    <source>
    </source>
</evidence>
<evidence type="ECO:0000269" key="12">
    <source>
    </source>
</evidence>
<evidence type="ECO:0000269" key="13">
    <source>
    </source>
</evidence>
<evidence type="ECO:0000269" key="14">
    <source>
    </source>
</evidence>
<evidence type="ECO:0000303" key="15">
    <source>
    </source>
</evidence>
<evidence type="ECO:0000305" key="16"/>
<evidence type="ECO:0007744" key="17">
    <source>
    </source>
</evidence>
<evidence type="ECO:0007744" key="18">
    <source>
    </source>
</evidence>
<evidence type="ECO:0007744" key="19">
    <source>
    </source>
</evidence>
<evidence type="ECO:0007744" key="20">
    <source>
    </source>
</evidence>
<evidence type="ECO:0007829" key="21">
    <source>
        <dbReference type="PDB" id="1QZY"/>
    </source>
</evidence>
<evidence type="ECO:0007829" key="22">
    <source>
        <dbReference type="PDB" id="1R58"/>
    </source>
</evidence>
<evidence type="ECO:0007829" key="23">
    <source>
        <dbReference type="PDB" id="5D6E"/>
    </source>
</evidence>
<evidence type="ECO:0007829" key="24">
    <source>
        <dbReference type="PDB" id="6QEJ"/>
    </source>
</evidence>
<sequence length="478" mass="52892">MAGVEEVAASGSHLNGDLDPDDREEGAASTAEEAAKKKRRKKKKSKGPSAAGEQEPDKESGASVDEVARQLERSALEDKERDEDDEDGDGDGDGATGKKKKKKKKKRGPKVQTDPPSVPICDLYPNGVFPKGQECEYPPTQDGRTAAWRTTSEEKKALDQASEEIWNDFREAAEAHRQVRKYVMSWIKPGMTMIEICEKLEDCSRKLIKENGLNAGLAFPTGCSLNNCAAHYTPNAGDTTVLQYDDICKIDFGTHISGRIIDCAFTVTFNPKYDTLLKAVKDATNTGIKCAGIDVRLCDVGEAIQEVMESYEVEIDGKTYQVKPIRNLNGHSIGQYRIHAGKTVPIVKGGEATRMEEGEVYAIETFGSTGKGVVHDDMECSHYMKNFDVGHVPIRLPRTKHLLNVINENFGTLAFCRRWLDRLGESKYLMALKNLCDLGIVDPYPPLCDIKGSYTAQFEHTILLRPTCKEVVSRGDDY</sequence>
<comment type="function">
    <text>Cotranslationally removes the N-terminal methionine from nascent proteins. The N-terminal methionine is often cleaved when the second residue in the primary sequence is small and uncharged (Met-Ala-, Cys, Gly, Pro, Ser, Thr, or Val). The catalytic activity of human METAP2 toward Met-Val peptides is consistently two orders of magnitude higher than that of METAP1, suggesting that it is responsible for processing proteins containing N-terminal Met-Val and Met-Thr sequences in vivo.</text>
</comment>
<comment type="function">
    <text>Protects eukaryotic initiation factor EIF2S1 from translation-inhibiting phosphorylation by inhibitory kinases such as EIF2AK2/PKR and EIF2AK1/HCR. Plays a critical role in the regulation of protein synthesis.</text>
</comment>
<comment type="catalytic activity">
    <reaction evidence="2 11">
        <text>Release of N-terminal amino acids, preferentially methionine, from peptides and arylamides.</text>
        <dbReference type="EC" id="3.4.11.18"/>
    </reaction>
</comment>
<comment type="cofactor">
    <cofactor evidence="2 4 10 14">
        <name>Co(2+)</name>
        <dbReference type="ChEBI" id="CHEBI:48828"/>
    </cofactor>
    <cofactor evidence="2 4 10 14">
        <name>Zn(2+)</name>
        <dbReference type="ChEBI" id="CHEBI:29105"/>
    </cofactor>
    <cofactor evidence="2 4 10 14">
        <name>Mn(2+)</name>
        <dbReference type="ChEBI" id="CHEBI:29035"/>
    </cofactor>
    <cofactor evidence="2 4 10 14">
        <name>Fe(2+)</name>
        <dbReference type="ChEBI" id="CHEBI:29033"/>
    </cofactor>
    <text evidence="2 4 10 14">Binds 2 divalent metal cations per subunit. Has a high-affinity and a low affinity metal-binding site. The true nature of the physiological cofactor is under debate. The enzyme is active with cobalt, zinc, manganese or divalent iron ions. Most likely, methionine aminopeptidases function as mononuclear Fe(2+)-metalloproteases under physiological conditions, and the catalytically relevant metal-binding site has been assigned to the histidine-containing high-affinity site. Also manganese has been proposed to be the physiological cofactor for human METAP2.</text>
</comment>
<comment type="subunit">
    <text evidence="1 5 6 7 9 10 14">Interacts strongly with the eIF-2 gamma-subunit EIF2S3 (By similarity). Binds EIF2S1 at low magnesium concentrations.</text>
</comment>
<comment type="interaction">
    <interactant intactId="EBI-2214155">
        <id>P50579</id>
    </interactant>
    <interactant intactId="EBI-8592297">
        <id>P21917</id>
        <label>DRD4</label>
    </interactant>
    <organismsDiffer>false</organismsDiffer>
    <experiments>3</experiments>
</comment>
<comment type="interaction">
    <interactant intactId="EBI-2214155">
        <id>P50579</id>
    </interactant>
    <interactant intactId="EBI-10185081">
        <id>Q96LA5</id>
        <label>FCRL2</label>
    </interactant>
    <organismsDiffer>false</organismsDiffer>
    <experiments>2</experiments>
</comment>
<comment type="interaction">
    <interactant intactId="EBI-2214155">
        <id>P50579</id>
    </interactant>
    <interactant intactId="EBI-11722320">
        <id>Q9HBH5</id>
        <label>RDH14</label>
    </interactant>
    <organismsDiffer>false</organismsDiffer>
    <experiments>3</experiments>
</comment>
<comment type="subcellular location">
    <subcellularLocation>
        <location evidence="2 12">Cytoplasm</location>
    </subcellularLocation>
    <text>About 30% of expressed METAP2 associates with polysomes.</text>
</comment>
<comment type="alternative products">
    <event type="alternative splicing"/>
    <isoform>
        <id>P50579-1</id>
        <name>1</name>
        <sequence type="displayed"/>
    </isoform>
    <isoform>
        <id>P50579-2</id>
        <name>2</name>
        <sequence type="described" ref="VSP_055467 VSP_055468"/>
    </isoform>
    <isoform>
        <id>P50579-3</id>
        <name>3</name>
        <sequence type="described" ref="VSP_057353"/>
    </isoform>
</comment>
<comment type="PTM">
    <text evidence="2 13">Contains approximately 12 O-linked N-acetylglucosamine (GlcNAc) residues. O-glycosylation is required for EIF2S1 binding.</text>
</comment>
<comment type="similarity">
    <text evidence="2">Belongs to the peptidase M24A family. Methionine aminopeptidase eukaryotic type 2 subfamily.</text>
</comment>
<comment type="online information" name="Atlas of Genetics and Cytogenetics in Oncology and Haematology">
    <link uri="https://atlasgeneticsoncology.org/gene/46053/METAP2"/>
</comment>
<organism>
    <name type="scientific">Homo sapiens</name>
    <name type="common">Human</name>
    <dbReference type="NCBI Taxonomy" id="9606"/>
    <lineage>
        <taxon>Eukaryota</taxon>
        <taxon>Metazoa</taxon>
        <taxon>Chordata</taxon>
        <taxon>Craniata</taxon>
        <taxon>Vertebrata</taxon>
        <taxon>Euteleostomi</taxon>
        <taxon>Mammalia</taxon>
        <taxon>Eutheria</taxon>
        <taxon>Euarchontoglires</taxon>
        <taxon>Primates</taxon>
        <taxon>Haplorrhini</taxon>
        <taxon>Catarrhini</taxon>
        <taxon>Hominidae</taxon>
        <taxon>Homo</taxon>
    </lineage>
</organism>
<feature type="initiator methionine" description="Removed" evidence="18">
    <location>
        <position position="1"/>
    </location>
</feature>
<feature type="chain" id="PRO_0000148982" description="Methionine aminopeptidase 2">
    <location>
        <begin position="2"/>
        <end position="478"/>
    </location>
</feature>
<feature type="region of interest" description="Disordered" evidence="3">
    <location>
        <begin position="1"/>
        <end position="122"/>
    </location>
</feature>
<feature type="compositionally biased region" description="Basic residues" evidence="3">
    <location>
        <begin position="36"/>
        <end position="46"/>
    </location>
</feature>
<feature type="compositionally biased region" description="Basic and acidic residues" evidence="3">
    <location>
        <begin position="55"/>
        <end position="79"/>
    </location>
</feature>
<feature type="compositionally biased region" description="Acidic residues" evidence="3">
    <location>
        <begin position="80"/>
        <end position="92"/>
    </location>
</feature>
<feature type="compositionally biased region" description="Basic residues" evidence="3">
    <location>
        <begin position="97"/>
        <end position="109"/>
    </location>
</feature>
<feature type="binding site" evidence="2 8">
    <location>
        <position position="231"/>
    </location>
    <ligand>
        <name>substrate</name>
    </ligand>
</feature>
<feature type="binding site" evidence="2 5 7 8 9 10">
    <location>
        <position position="251"/>
    </location>
    <ligand>
        <name>a divalent metal cation</name>
        <dbReference type="ChEBI" id="CHEBI:60240"/>
        <label>1</label>
    </ligand>
</feature>
<feature type="binding site" evidence="2 5 7 8 9 10">
    <location>
        <position position="262"/>
    </location>
    <ligand>
        <name>a divalent metal cation</name>
        <dbReference type="ChEBI" id="CHEBI:60240"/>
        <label>1</label>
    </ligand>
</feature>
<feature type="binding site" evidence="2 5 7 8 9 10">
    <location>
        <position position="262"/>
    </location>
    <ligand>
        <name>a divalent metal cation</name>
        <dbReference type="ChEBI" id="CHEBI:60240"/>
        <label>2</label>
        <note>catalytic</note>
    </ligand>
</feature>
<feature type="binding site" evidence="2 5 7 8 9 10">
    <location>
        <position position="331"/>
    </location>
    <ligand>
        <name>a divalent metal cation</name>
        <dbReference type="ChEBI" id="CHEBI:60240"/>
        <label>2</label>
        <note>catalytic</note>
    </ligand>
</feature>
<feature type="binding site" evidence="2 8">
    <location>
        <position position="339"/>
    </location>
    <ligand>
        <name>substrate</name>
    </ligand>
</feature>
<feature type="binding site" evidence="2 5 7 8 9 10">
    <location>
        <position position="364"/>
    </location>
    <ligand>
        <name>a divalent metal cation</name>
        <dbReference type="ChEBI" id="CHEBI:60240"/>
        <label>2</label>
        <note>catalytic</note>
    </ligand>
</feature>
<feature type="binding site" evidence="2 5 7 8 9 10">
    <location>
        <position position="459"/>
    </location>
    <ligand>
        <name>a divalent metal cation</name>
        <dbReference type="ChEBI" id="CHEBI:60240"/>
        <label>1</label>
    </ligand>
</feature>
<feature type="binding site" evidence="2 5 7 8 9 10">
    <location>
        <position position="459"/>
    </location>
    <ligand>
        <name>a divalent metal cation</name>
        <dbReference type="ChEBI" id="CHEBI:60240"/>
        <label>2</label>
        <note>catalytic</note>
    </ligand>
</feature>
<feature type="modified residue" description="N-acetylalanine" evidence="18">
    <location>
        <position position="2"/>
    </location>
</feature>
<feature type="modified residue" description="Phosphoserine" evidence="17 19 20">
    <location>
        <position position="45"/>
    </location>
</feature>
<feature type="modified residue" description="Phosphoserine; alternate" evidence="17">
    <location>
        <position position="60"/>
    </location>
</feature>
<feature type="modified residue" description="Phosphoserine; alternate" evidence="17 20">
    <location>
        <position position="63"/>
    </location>
</feature>
<feature type="modified residue" description="Phosphoserine" evidence="17 19 20">
    <location>
        <position position="74"/>
    </location>
</feature>
<feature type="glycosylation site" description="O-linked (GlcNAc) serine; alternate" evidence="1">
    <location>
        <position position="60"/>
    </location>
</feature>
<feature type="glycosylation site" description="O-linked (GlcNAc) serine; alternate" evidence="1">
    <location>
        <position position="63"/>
    </location>
</feature>
<feature type="splice variant" id="VSP_055467" description="In isoform 2." evidence="15">
    <location>
        <position position="50"/>
    </location>
</feature>
<feature type="splice variant" id="VSP_055468" description="In isoform 2." evidence="15">
    <original>DGDGDGDGATGKKKKKKKKKRGP</original>
    <variation>A</variation>
    <location>
        <begin position="87"/>
        <end position="109"/>
    </location>
</feature>
<feature type="splice variant" id="VSP_057353" description="In isoform 3." evidence="15">
    <original>PKVQTDPPSVPICDLYPNGVFPKG</original>
    <variation>R</variation>
    <location>
        <begin position="109"/>
        <end position="132"/>
    </location>
</feature>
<feature type="sequence conflict" description="In Ref. 3; BAC03733." evidence="16" ref="3">
    <original>N</original>
    <variation>D</variation>
    <location>
        <position position="434"/>
    </location>
</feature>
<feature type="helix" evidence="23">
    <location>
        <begin position="120"/>
        <end position="123"/>
    </location>
</feature>
<feature type="strand" evidence="24">
    <location>
        <begin position="124"/>
        <end position="127"/>
    </location>
</feature>
<feature type="strand" evidence="23">
    <location>
        <begin position="133"/>
        <end position="135"/>
    </location>
</feature>
<feature type="strand" evidence="22">
    <location>
        <begin position="141"/>
        <end position="143"/>
    </location>
</feature>
<feature type="helix" evidence="23">
    <location>
        <begin position="147"/>
        <end position="151"/>
    </location>
</feature>
<feature type="helix" evidence="23">
    <location>
        <begin position="153"/>
        <end position="160"/>
    </location>
</feature>
<feature type="helix" evidence="23">
    <location>
        <begin position="163"/>
        <end position="186"/>
    </location>
</feature>
<feature type="helix" evidence="23">
    <location>
        <begin position="193"/>
        <end position="208"/>
    </location>
</feature>
<feature type="helix" evidence="23">
    <location>
        <begin position="212"/>
        <end position="214"/>
    </location>
</feature>
<feature type="strand" evidence="23">
    <location>
        <begin position="215"/>
        <end position="225"/>
    </location>
</feature>
<feature type="strand" evidence="23">
    <location>
        <begin position="228"/>
        <end position="231"/>
    </location>
</feature>
<feature type="strand" evidence="23">
    <location>
        <begin position="248"/>
        <end position="256"/>
    </location>
</feature>
<feature type="strand" evidence="23">
    <location>
        <begin position="259"/>
        <end position="267"/>
    </location>
</feature>
<feature type="helix" evidence="23">
    <location>
        <begin position="271"/>
        <end position="273"/>
    </location>
</feature>
<feature type="helix" evidence="23">
    <location>
        <begin position="274"/>
        <end position="290"/>
    </location>
</feature>
<feature type="helix" evidence="23">
    <location>
        <begin position="297"/>
        <end position="309"/>
    </location>
</feature>
<feature type="strand" evidence="23">
    <location>
        <begin position="312"/>
        <end position="315"/>
    </location>
</feature>
<feature type="strand" evidence="23">
    <location>
        <begin position="318"/>
        <end position="321"/>
    </location>
</feature>
<feature type="strand" evidence="23">
    <location>
        <begin position="330"/>
        <end position="334"/>
    </location>
</feature>
<feature type="strand" evidence="21">
    <location>
        <begin position="337"/>
        <end position="339"/>
    </location>
</feature>
<feature type="strand" evidence="23">
    <location>
        <begin position="346"/>
        <end position="349"/>
    </location>
</feature>
<feature type="strand" evidence="23">
    <location>
        <begin position="360"/>
        <end position="370"/>
    </location>
</feature>
<feature type="strand" evidence="23">
    <location>
        <begin position="382"/>
        <end position="385"/>
    </location>
</feature>
<feature type="helix" evidence="23">
    <location>
        <begin position="397"/>
        <end position="409"/>
    </location>
</feature>
<feature type="turn" evidence="23">
    <location>
        <begin position="410"/>
        <end position="412"/>
    </location>
</feature>
<feature type="helix" evidence="23">
    <location>
        <begin position="417"/>
        <end position="421"/>
    </location>
</feature>
<feature type="turn" evidence="23">
    <location>
        <begin position="422"/>
        <end position="424"/>
    </location>
</feature>
<feature type="helix" evidence="23">
    <location>
        <begin position="429"/>
        <end position="437"/>
    </location>
</feature>
<feature type="strand" evidence="23">
    <location>
        <begin position="440"/>
        <end position="444"/>
    </location>
</feature>
<feature type="strand" evidence="23">
    <location>
        <begin position="455"/>
        <end position="464"/>
    </location>
</feature>
<feature type="strand" evidence="23">
    <location>
        <begin position="469"/>
        <end position="471"/>
    </location>
</feature>
<proteinExistence type="evidence at protein level"/>
<protein>
    <recommendedName>
        <fullName evidence="2">Methionine aminopeptidase 2</fullName>
        <shortName evidence="2">MAP 2</shortName>
        <shortName evidence="2">MetAP 2</shortName>
        <ecNumber evidence="2">3.4.11.18</ecNumber>
    </recommendedName>
    <alternativeName>
        <fullName evidence="2">Initiation factor 2-associated 67 kDa glycoprotein</fullName>
        <shortName evidence="2">p67</shortName>
        <shortName evidence="2">p67eIF2</shortName>
    </alternativeName>
    <alternativeName>
        <fullName evidence="2">Peptidase M</fullName>
    </alternativeName>
</protein>
<keyword id="KW-0002">3D-structure</keyword>
<keyword id="KW-0007">Acetylation</keyword>
<keyword id="KW-0025">Alternative splicing</keyword>
<keyword id="KW-0031">Aminopeptidase</keyword>
<keyword id="KW-0963">Cytoplasm</keyword>
<keyword id="KW-0903">Direct protein sequencing</keyword>
<keyword id="KW-0325">Glycoprotein</keyword>
<keyword id="KW-0378">Hydrolase</keyword>
<keyword id="KW-0479">Metal-binding</keyword>
<keyword id="KW-0597">Phosphoprotein</keyword>
<keyword id="KW-0645">Protease</keyword>
<keyword id="KW-1267">Proteomics identification</keyword>
<keyword id="KW-1185">Reference proteome</keyword>
<dbReference type="EC" id="3.4.11.18" evidence="2"/>
<dbReference type="EMBL" id="U29607">
    <property type="protein sequence ID" value="AAA82930.1"/>
    <property type="molecule type" value="mRNA"/>
</dbReference>
<dbReference type="EMBL" id="U13261">
    <property type="protein sequence ID" value="AAC63402.1"/>
    <property type="molecule type" value="mRNA"/>
</dbReference>
<dbReference type="EMBL" id="AK091730">
    <property type="protein sequence ID" value="BAC03733.1"/>
    <property type="molecule type" value="mRNA"/>
</dbReference>
<dbReference type="EMBL" id="AK300836">
    <property type="protein sequence ID" value="BAG62487.1"/>
    <property type="molecule type" value="mRNA"/>
</dbReference>
<dbReference type="EMBL" id="AK315559">
    <property type="protein sequence ID" value="BAG37935.1"/>
    <property type="molecule type" value="mRNA"/>
</dbReference>
<dbReference type="EMBL" id="AC018475">
    <property type="status" value="NOT_ANNOTATED_CDS"/>
    <property type="molecule type" value="Genomic_DNA"/>
</dbReference>
<dbReference type="EMBL" id="CH471054">
    <property type="protein sequence ID" value="EAW97537.1"/>
    <property type="molecule type" value="Genomic_DNA"/>
</dbReference>
<dbReference type="EMBL" id="CH471054">
    <property type="protein sequence ID" value="EAW97538.1"/>
    <property type="molecule type" value="Genomic_DNA"/>
</dbReference>
<dbReference type="EMBL" id="BC013782">
    <property type="protein sequence ID" value="AAH13782.1"/>
    <property type="molecule type" value="mRNA"/>
</dbReference>
<dbReference type="CCDS" id="CCDS81723.1">
    <molecule id="P50579-3"/>
</dbReference>
<dbReference type="CCDS" id="CCDS81725.1">
    <molecule id="P50579-2"/>
</dbReference>
<dbReference type="CCDS" id="CCDS9052.1">
    <molecule id="P50579-1"/>
</dbReference>
<dbReference type="PIR" id="S52112">
    <property type="entry name" value="DPHUM2"/>
</dbReference>
<dbReference type="RefSeq" id="NP_001304111.1">
    <molecule id="P50579-3"/>
    <property type="nucleotide sequence ID" value="NM_001317182.2"/>
</dbReference>
<dbReference type="RefSeq" id="NP_001304112.1">
    <molecule id="P50579-2"/>
    <property type="nucleotide sequence ID" value="NM_001317183.2"/>
</dbReference>
<dbReference type="RefSeq" id="NP_001317175.1">
    <property type="nucleotide sequence ID" value="NM_001330246.1"/>
</dbReference>
<dbReference type="RefSeq" id="NP_006829.1">
    <molecule id="P50579-1"/>
    <property type="nucleotide sequence ID" value="NM_006838.4"/>
</dbReference>
<dbReference type="PDB" id="1B59">
    <property type="method" value="X-ray"/>
    <property type="resolution" value="1.80 A"/>
    <property type="chains" value="A=109-478"/>
</dbReference>
<dbReference type="PDB" id="1B6A">
    <property type="method" value="X-ray"/>
    <property type="resolution" value="1.60 A"/>
    <property type="chains" value="A=1-478"/>
</dbReference>
<dbReference type="PDB" id="1BN5">
    <property type="method" value="X-ray"/>
    <property type="resolution" value="1.80 A"/>
    <property type="chains" value="A=1-478"/>
</dbReference>
<dbReference type="PDB" id="1BOA">
    <property type="method" value="X-ray"/>
    <property type="resolution" value="1.80 A"/>
    <property type="chains" value="A=1-478"/>
</dbReference>
<dbReference type="PDB" id="1KQ0">
    <property type="method" value="X-ray"/>
    <property type="resolution" value="2.00 A"/>
    <property type="chains" value="A=1-478"/>
</dbReference>
<dbReference type="PDB" id="1KQ9">
    <property type="method" value="X-ray"/>
    <property type="resolution" value="1.90 A"/>
    <property type="chains" value="A=1-478"/>
</dbReference>
<dbReference type="PDB" id="1QZY">
    <property type="method" value="X-ray"/>
    <property type="resolution" value="1.60 A"/>
    <property type="chains" value="A=1-478"/>
</dbReference>
<dbReference type="PDB" id="1R58">
    <property type="method" value="X-ray"/>
    <property type="resolution" value="1.90 A"/>
    <property type="chains" value="A=110-478"/>
</dbReference>
<dbReference type="PDB" id="1R5G">
    <property type="method" value="X-ray"/>
    <property type="resolution" value="2.00 A"/>
    <property type="chains" value="A=110-478"/>
</dbReference>
<dbReference type="PDB" id="1R5H">
    <property type="method" value="X-ray"/>
    <property type="resolution" value="2.40 A"/>
    <property type="chains" value="A=110-478"/>
</dbReference>
<dbReference type="PDB" id="1YW7">
    <property type="method" value="X-ray"/>
    <property type="resolution" value="1.85 A"/>
    <property type="chains" value="A=110-478"/>
</dbReference>
<dbReference type="PDB" id="1YW8">
    <property type="method" value="X-ray"/>
    <property type="resolution" value="2.65 A"/>
    <property type="chains" value="A=110-478"/>
</dbReference>
<dbReference type="PDB" id="1YW9">
    <property type="method" value="X-ray"/>
    <property type="resolution" value="1.64 A"/>
    <property type="chains" value="A=110-478"/>
</dbReference>
<dbReference type="PDB" id="2ADU">
    <property type="method" value="X-ray"/>
    <property type="resolution" value="1.90 A"/>
    <property type="chains" value="A=110-478"/>
</dbReference>
<dbReference type="PDB" id="2EA2">
    <property type="method" value="X-ray"/>
    <property type="resolution" value="2.50 A"/>
    <property type="chains" value="A=110-478"/>
</dbReference>
<dbReference type="PDB" id="2EA4">
    <property type="method" value="X-ray"/>
    <property type="resolution" value="2.35 A"/>
    <property type="chains" value="A=110-478"/>
</dbReference>
<dbReference type="PDB" id="2GA2">
    <property type="method" value="X-ray"/>
    <property type="resolution" value="1.95 A"/>
    <property type="chains" value="A=110-478"/>
</dbReference>
<dbReference type="PDB" id="2OAZ">
    <property type="method" value="X-ray"/>
    <property type="resolution" value="1.90 A"/>
    <property type="chains" value="A=110-478"/>
</dbReference>
<dbReference type="PDB" id="5CLS">
    <property type="method" value="X-ray"/>
    <property type="resolution" value="1.75 A"/>
    <property type="chains" value="A=108-478"/>
</dbReference>
<dbReference type="PDB" id="5D6E">
    <property type="method" value="X-ray"/>
    <property type="resolution" value="1.49 A"/>
    <property type="chains" value="A=108-478"/>
</dbReference>
<dbReference type="PDB" id="5D6F">
    <property type="method" value="X-ray"/>
    <property type="resolution" value="1.55 A"/>
    <property type="chains" value="A=108-478"/>
</dbReference>
<dbReference type="PDB" id="5JFR">
    <property type="method" value="X-ray"/>
    <property type="resolution" value="1.60 A"/>
    <property type="chains" value="A=110-478"/>
</dbReference>
<dbReference type="PDB" id="5JHU">
    <property type="method" value="X-ray"/>
    <property type="resolution" value="1.80 A"/>
    <property type="chains" value="A=110-478"/>
</dbReference>
<dbReference type="PDB" id="5JI6">
    <property type="method" value="X-ray"/>
    <property type="resolution" value="2.15 A"/>
    <property type="chains" value="A=110-478"/>
</dbReference>
<dbReference type="PDB" id="5LYW">
    <property type="method" value="X-ray"/>
    <property type="resolution" value="1.69 A"/>
    <property type="chains" value="A=108-478"/>
</dbReference>
<dbReference type="PDB" id="5LYX">
    <property type="method" value="X-ray"/>
    <property type="resolution" value="1.90 A"/>
    <property type="chains" value="A=108-478"/>
</dbReference>
<dbReference type="PDB" id="6QED">
    <property type="method" value="X-ray"/>
    <property type="resolution" value="1.80 A"/>
    <property type="chains" value="A=108-478"/>
</dbReference>
<dbReference type="PDB" id="6QEF">
    <property type="method" value="X-ray"/>
    <property type="resolution" value="1.79 A"/>
    <property type="chains" value="A=108-478"/>
</dbReference>
<dbReference type="PDB" id="6QEG">
    <property type="method" value="X-ray"/>
    <property type="resolution" value="2.08 A"/>
    <property type="chains" value="A=108-478"/>
</dbReference>
<dbReference type="PDB" id="6QEH">
    <property type="method" value="X-ray"/>
    <property type="resolution" value="2.17 A"/>
    <property type="chains" value="A=108-478"/>
</dbReference>
<dbReference type="PDB" id="6QEI">
    <property type="method" value="X-ray"/>
    <property type="resolution" value="1.80 A"/>
    <property type="chains" value="A=108-478"/>
</dbReference>
<dbReference type="PDB" id="6QEJ">
    <property type="method" value="X-ray"/>
    <property type="resolution" value="1.62 A"/>
    <property type="chains" value="A=108-478"/>
</dbReference>
<dbReference type="PDB" id="7A12">
    <property type="method" value="X-ray"/>
    <property type="resolution" value="2.00 A"/>
    <property type="chains" value="A=108-478"/>
</dbReference>
<dbReference type="PDB" id="7A13">
    <property type="method" value="X-ray"/>
    <property type="resolution" value="2.04 A"/>
    <property type="chains" value="A=108-478"/>
</dbReference>
<dbReference type="PDB" id="7A14">
    <property type="method" value="X-ray"/>
    <property type="resolution" value="2.14 A"/>
    <property type="chains" value="A=108-478"/>
</dbReference>
<dbReference type="PDB" id="7A15">
    <property type="method" value="X-ray"/>
    <property type="resolution" value="2.15 A"/>
    <property type="chains" value="A=108-478"/>
</dbReference>
<dbReference type="PDB" id="7A16">
    <property type="method" value="X-ray"/>
    <property type="resolution" value="1.90 A"/>
    <property type="chains" value="A=108-478"/>
</dbReference>
<dbReference type="PDB" id="8ONY">
    <property type="method" value="EM"/>
    <property type="resolution" value="2.92 A"/>
    <property type="chains" value="A=1-478"/>
</dbReference>
<dbReference type="PDB" id="8OXG">
    <property type="method" value="X-ray"/>
    <property type="resolution" value="1.73 A"/>
    <property type="chains" value="A/B=108-478"/>
</dbReference>
<dbReference type="PDB" id="9FPZ">
    <property type="method" value="EM"/>
    <property type="resolution" value="2.69 A"/>
    <property type="chains" value="A=1-478"/>
</dbReference>
<dbReference type="PDBsum" id="1B59"/>
<dbReference type="PDBsum" id="1B6A"/>
<dbReference type="PDBsum" id="1BN5"/>
<dbReference type="PDBsum" id="1BOA"/>
<dbReference type="PDBsum" id="1KQ0"/>
<dbReference type="PDBsum" id="1KQ9"/>
<dbReference type="PDBsum" id="1QZY"/>
<dbReference type="PDBsum" id="1R58"/>
<dbReference type="PDBsum" id="1R5G"/>
<dbReference type="PDBsum" id="1R5H"/>
<dbReference type="PDBsum" id="1YW7"/>
<dbReference type="PDBsum" id="1YW8"/>
<dbReference type="PDBsum" id="1YW9"/>
<dbReference type="PDBsum" id="2ADU"/>
<dbReference type="PDBsum" id="2EA2"/>
<dbReference type="PDBsum" id="2EA4"/>
<dbReference type="PDBsum" id="2GA2"/>
<dbReference type="PDBsum" id="2OAZ"/>
<dbReference type="PDBsum" id="5CLS"/>
<dbReference type="PDBsum" id="5D6E"/>
<dbReference type="PDBsum" id="5D6F"/>
<dbReference type="PDBsum" id="5JFR"/>
<dbReference type="PDBsum" id="5JHU"/>
<dbReference type="PDBsum" id="5JI6"/>
<dbReference type="PDBsum" id="5LYW"/>
<dbReference type="PDBsum" id="5LYX"/>
<dbReference type="PDBsum" id="6QED"/>
<dbReference type="PDBsum" id="6QEF"/>
<dbReference type="PDBsum" id="6QEG"/>
<dbReference type="PDBsum" id="6QEH"/>
<dbReference type="PDBsum" id="6QEI"/>
<dbReference type="PDBsum" id="6QEJ"/>
<dbReference type="PDBsum" id="7A12"/>
<dbReference type="PDBsum" id="7A13"/>
<dbReference type="PDBsum" id="7A14"/>
<dbReference type="PDBsum" id="7A15"/>
<dbReference type="PDBsum" id="7A16"/>
<dbReference type="PDBsum" id="8ONY"/>
<dbReference type="PDBsum" id="8OXG"/>
<dbReference type="PDBsum" id="9FPZ"/>
<dbReference type="EMDB" id="EMD-17002"/>
<dbReference type="EMDB" id="EMD-50641"/>
<dbReference type="SMR" id="P50579"/>
<dbReference type="BioGRID" id="116184">
    <property type="interactions" value="280"/>
</dbReference>
<dbReference type="CORUM" id="P50579"/>
<dbReference type="FunCoup" id="P50579">
    <property type="interactions" value="2658"/>
</dbReference>
<dbReference type="IntAct" id="P50579">
    <property type="interactions" value="213"/>
</dbReference>
<dbReference type="MINT" id="P50579"/>
<dbReference type="STRING" id="9606.ENSP00000325312"/>
<dbReference type="BindingDB" id="P50579"/>
<dbReference type="ChEMBL" id="CHEMBL3922"/>
<dbReference type="DrugBank" id="DB03396">
    <property type="generic name" value="(2R,3R,4S,5R,6E)-3,4,5-Trihydroxy-N-[(3S,6R)-6-hydroxy-2-oxo-3-azepanyl]-2-methoxy-8,8-dimethyl-6-nonenamide"/>
</dbReference>
<dbReference type="DrugBank" id="DB04108">
    <property type="generic name" value="(2s,3r)-3-Amino-2-Hydroxy-5-(Ethylsulfanyl)Pentanoyl-((S)-(-)-(1-Naphthyl)Ethyl)Amide"/>
</dbReference>
<dbReference type="DrugBank" id="DB07322">
    <property type="generic name" value="2-[(PHENYLSULFONYL)AMINO]-5,6,7,8-TETRAHYDRONAPHTHALENE-1-CARBOXYLIC ACID"/>
</dbReference>
<dbReference type="DrugBank" id="DB07323">
    <property type="generic name" value="2-[({2-[(1Z)-3-(DIMETHYLAMINO)PROP-1-ENYL]-4-FLUOROPHENYL}SULFONYL)AMINO]-5,6,7,8-TETRAHYDRONAPHTHALENE-1-CARBOXYLIC ACID"/>
</dbReference>
<dbReference type="DrugBank" id="DB02310">
    <property type="generic name" value="3,5,6,8-Tetramethyl-N-Methyl Phenanthrolinium"/>
</dbReference>
<dbReference type="DrugBank" id="DB07746">
    <property type="generic name" value="3-ETHYL-6-{[(4-FLUOROPHENYL)SULFONYL]AMINO}-2-METHYLBENZOIC ACID"/>
</dbReference>
<dbReference type="DrugBank" id="DB07309">
    <property type="generic name" value="5-BROMO-2-{[(4-CHLOROPHENYL)SULFONYL]AMINO}BENZOIC ACID"/>
</dbReference>
<dbReference type="DrugBank" id="DB07313">
    <property type="generic name" value="5-METHYL-2-[(PHENYLSULFONYL)AMINO]BENZOIC ACID"/>
</dbReference>
<dbReference type="DrugBank" id="DB16079">
    <property type="generic name" value="Aclimostat"/>
</dbReference>
<dbReference type="DrugBank" id="DB12671">
    <property type="generic name" value="Beloranib"/>
</dbReference>
<dbReference type="DrugBank" id="DB02893">
    <property type="generic name" value="D-Methionine"/>
</dbReference>
<dbReference type="DrugBank" id="DB02640">
    <property type="generic name" value="Fumagillin"/>
</dbReference>
<dbReference type="DrugBank" id="DB00134">
    <property type="generic name" value="Methionine"/>
</dbReference>
<dbReference type="DrugBank" id="DB07377">
    <property type="generic name" value="N'-((2S,3R)-3-AMINO-2-HYDROXY-5-(ISOPROPYLSULFANYL)PENTANOYL)-N-3-CHLOROBENZOYL HYDRAZIDE"/>
</dbReference>
<dbReference type="DrugBank" id="DB03086">
    <property type="generic name" value="N'-(2s,3r)-3-Amino-4-Cyclohexyl-2-Hydroxy-Butano-N-(4-Methylphenyl)Hydrazide"/>
</dbReference>
<dbReference type="DrugBank" id="DB01422">
    <property type="generic name" value="Nitroxoline"/>
</dbReference>
<dbReference type="DrugBank" id="DB04324">
    <property type="generic name" value="Ovalicin"/>
</dbReference>
<dbReference type="DrugBank" id="DB11145">
    <property type="generic name" value="Oxyquinoline"/>
</dbReference>
<dbReference type="DrugBank" id="DB05864">
    <property type="generic name" value="PPI-2458"/>
</dbReference>
<dbReference type="DrugBank" id="DB03900">
    <property type="generic name" value="tert-butanol"/>
</dbReference>
<dbReference type="DrugBank" id="DB08633">
    <property type="generic name" value="TNP-470"/>
</dbReference>
<dbReference type="DrugCentral" id="P50579"/>
<dbReference type="GuidetoPHARMACOLOGY" id="1573"/>
<dbReference type="MEROPS" id="M24.002"/>
<dbReference type="GlyCosmos" id="P50579">
    <property type="glycosylation" value="2 sites, No reported glycans"/>
</dbReference>
<dbReference type="GlyGen" id="P50579">
    <property type="glycosylation" value="3 sites, 1 O-linked glycan (1 site)"/>
</dbReference>
<dbReference type="iPTMnet" id="P50579"/>
<dbReference type="MetOSite" id="P50579"/>
<dbReference type="PhosphoSitePlus" id="P50579"/>
<dbReference type="SwissPalm" id="P50579"/>
<dbReference type="BioMuta" id="METAP2"/>
<dbReference type="DMDM" id="1703273"/>
<dbReference type="REPRODUCTION-2DPAGE" id="IPI00033036"/>
<dbReference type="jPOST" id="P50579"/>
<dbReference type="MassIVE" id="P50579"/>
<dbReference type="PaxDb" id="9606-ENSP00000325312"/>
<dbReference type="PeptideAtlas" id="P50579"/>
<dbReference type="ProteomicsDB" id="33683"/>
<dbReference type="ProteomicsDB" id="5231"/>
<dbReference type="ProteomicsDB" id="56252">
    <molecule id="P50579-1"/>
</dbReference>
<dbReference type="Pumba" id="P50579"/>
<dbReference type="TopDownProteomics" id="P50579-1">
    <molecule id="P50579-1"/>
</dbReference>
<dbReference type="Antibodypedia" id="4578">
    <property type="antibodies" value="310 antibodies from 35 providers"/>
</dbReference>
<dbReference type="DNASU" id="10988"/>
<dbReference type="Ensembl" id="ENST00000261220.13">
    <molecule id="P50579-2"/>
    <property type="protein sequence ID" value="ENSP00000261220.9"/>
    <property type="gene ID" value="ENSG00000111142.14"/>
</dbReference>
<dbReference type="Ensembl" id="ENST00000323666.10">
    <molecule id="P50579-1"/>
    <property type="protein sequence ID" value="ENSP00000325312.5"/>
    <property type="gene ID" value="ENSG00000111142.14"/>
</dbReference>
<dbReference type="Ensembl" id="ENST00000546753.5">
    <molecule id="P50579-3"/>
    <property type="protein sequence ID" value="ENSP00000448169.1"/>
    <property type="gene ID" value="ENSG00000111142.14"/>
</dbReference>
<dbReference type="GeneID" id="10988"/>
<dbReference type="KEGG" id="hsa:10988"/>
<dbReference type="MANE-Select" id="ENST00000323666.10">
    <property type="protein sequence ID" value="ENSP00000325312.5"/>
    <property type="RefSeq nucleotide sequence ID" value="NM_006838.4"/>
    <property type="RefSeq protein sequence ID" value="NP_006829.1"/>
</dbReference>
<dbReference type="UCSC" id="uc001tec.4">
    <molecule id="P50579-1"/>
    <property type="organism name" value="human"/>
</dbReference>
<dbReference type="AGR" id="HGNC:16672"/>
<dbReference type="CTD" id="10988"/>
<dbReference type="DisGeNET" id="10988"/>
<dbReference type="GeneCards" id="METAP2"/>
<dbReference type="HGNC" id="HGNC:16672">
    <property type="gene designation" value="METAP2"/>
</dbReference>
<dbReference type="HPA" id="ENSG00000111142">
    <property type="expression patterns" value="Low tissue specificity"/>
</dbReference>
<dbReference type="MIM" id="601870">
    <property type="type" value="gene"/>
</dbReference>
<dbReference type="neXtProt" id="NX_P50579"/>
<dbReference type="OpenTargets" id="ENSG00000111142"/>
<dbReference type="PharmGKB" id="PA30765"/>
<dbReference type="VEuPathDB" id="HostDB:ENSG00000111142"/>
<dbReference type="eggNOG" id="KOG2775">
    <property type="taxonomic scope" value="Eukaryota"/>
</dbReference>
<dbReference type="GeneTree" id="ENSGT00940000155016"/>
<dbReference type="InParanoid" id="P50579"/>
<dbReference type="OMA" id="GNGWVYD"/>
<dbReference type="OrthoDB" id="7848262at2759"/>
<dbReference type="PAN-GO" id="P50579">
    <property type="GO annotations" value="4 GO annotations based on evolutionary models"/>
</dbReference>
<dbReference type="PhylomeDB" id="P50579"/>
<dbReference type="TreeFam" id="TF300426"/>
<dbReference type="BioCyc" id="MetaCyc:HS03371-MONOMER"/>
<dbReference type="BRENDA" id="3.4.11.18">
    <property type="organism ID" value="2681"/>
</dbReference>
<dbReference type="PathwayCommons" id="P50579"/>
<dbReference type="Reactome" id="R-HSA-2514859">
    <property type="pathway name" value="Inactivation, recovery and regulation of the phototransduction cascade"/>
</dbReference>
<dbReference type="SABIO-RK" id="P50579"/>
<dbReference type="SignaLink" id="P50579"/>
<dbReference type="BioGRID-ORCS" id="10988">
    <property type="hits" value="495 hits in 1187 CRISPR screens"/>
</dbReference>
<dbReference type="CD-CODE" id="DEE660B4">
    <property type="entry name" value="Stress granule"/>
</dbReference>
<dbReference type="ChiTaRS" id="METAP2">
    <property type="organism name" value="human"/>
</dbReference>
<dbReference type="EvolutionaryTrace" id="P50579"/>
<dbReference type="GeneWiki" id="METAP2"/>
<dbReference type="GenomeRNAi" id="10988"/>
<dbReference type="Pharos" id="P50579">
    <property type="development level" value="Tchem"/>
</dbReference>
<dbReference type="PRO" id="PR:P50579"/>
<dbReference type="Proteomes" id="UP000005640">
    <property type="component" value="Chromosome 12"/>
</dbReference>
<dbReference type="RNAct" id="P50579">
    <property type="molecule type" value="protein"/>
</dbReference>
<dbReference type="Bgee" id="ENSG00000111142">
    <property type="expression patterns" value="Expressed in sural nerve and 204 other cell types or tissues"/>
</dbReference>
<dbReference type="ExpressionAtlas" id="P50579">
    <property type="expression patterns" value="baseline and differential"/>
</dbReference>
<dbReference type="GO" id="GO:0005737">
    <property type="term" value="C:cytoplasm"/>
    <property type="evidence" value="ECO:0000314"/>
    <property type="project" value="HGNC-UCL"/>
</dbReference>
<dbReference type="GO" id="GO:0005829">
    <property type="term" value="C:cytosol"/>
    <property type="evidence" value="ECO:0000314"/>
    <property type="project" value="HPA"/>
</dbReference>
<dbReference type="GO" id="GO:0005886">
    <property type="term" value="C:plasma membrane"/>
    <property type="evidence" value="ECO:0000314"/>
    <property type="project" value="HPA"/>
</dbReference>
<dbReference type="GO" id="GO:0004177">
    <property type="term" value="F:aminopeptidase activity"/>
    <property type="evidence" value="ECO:0000314"/>
    <property type="project" value="UniProtKB"/>
</dbReference>
<dbReference type="GO" id="GO:0004239">
    <property type="term" value="F:initiator methionyl aminopeptidase activity"/>
    <property type="evidence" value="ECO:0007669"/>
    <property type="project" value="UniProtKB-UniRule"/>
</dbReference>
<dbReference type="GO" id="GO:0046872">
    <property type="term" value="F:metal ion binding"/>
    <property type="evidence" value="ECO:0007669"/>
    <property type="project" value="UniProtKB-UniRule"/>
</dbReference>
<dbReference type="GO" id="GO:0070006">
    <property type="term" value="F:metalloaminopeptidase activity"/>
    <property type="evidence" value="ECO:0007669"/>
    <property type="project" value="UniProtKB-UniRule"/>
</dbReference>
<dbReference type="GO" id="GO:0008235">
    <property type="term" value="F:metalloexopeptidase activity"/>
    <property type="evidence" value="ECO:0000314"/>
    <property type="project" value="UniProtKB"/>
</dbReference>
<dbReference type="GO" id="GO:0003723">
    <property type="term" value="F:RNA binding"/>
    <property type="evidence" value="ECO:0007005"/>
    <property type="project" value="UniProtKB"/>
</dbReference>
<dbReference type="GO" id="GO:0016485">
    <property type="term" value="P:protein processing"/>
    <property type="evidence" value="ECO:0000314"/>
    <property type="project" value="HGNC-UCL"/>
</dbReference>
<dbReference type="GO" id="GO:0006446">
    <property type="term" value="P:regulation of translational initiation"/>
    <property type="evidence" value="ECO:0000314"/>
    <property type="project" value="HGNC-UCL"/>
</dbReference>
<dbReference type="CDD" id="cd01088">
    <property type="entry name" value="MetAP2"/>
    <property type="match status" value="1"/>
</dbReference>
<dbReference type="FunFam" id="1.10.10.10:FF:000106">
    <property type="entry name" value="Methionine aminopeptidase 2"/>
    <property type="match status" value="1"/>
</dbReference>
<dbReference type="FunFam" id="3.90.230.10:FF:000003">
    <property type="entry name" value="Methionine aminopeptidase 2"/>
    <property type="match status" value="1"/>
</dbReference>
<dbReference type="Gene3D" id="3.90.230.10">
    <property type="entry name" value="Creatinase/methionine aminopeptidase superfamily"/>
    <property type="match status" value="1"/>
</dbReference>
<dbReference type="Gene3D" id="1.10.10.10">
    <property type="entry name" value="Winged helix-like DNA-binding domain superfamily/Winged helix DNA-binding domain"/>
    <property type="match status" value="1"/>
</dbReference>
<dbReference type="HAMAP" id="MF_03175">
    <property type="entry name" value="MetAP_2_euk"/>
    <property type="match status" value="1"/>
</dbReference>
<dbReference type="InterPro" id="IPR036005">
    <property type="entry name" value="Creatinase/aminopeptidase-like"/>
</dbReference>
<dbReference type="InterPro" id="IPR050247">
    <property type="entry name" value="Met_Aminopeptidase_Type2"/>
</dbReference>
<dbReference type="InterPro" id="IPR000994">
    <property type="entry name" value="Pept_M24"/>
</dbReference>
<dbReference type="InterPro" id="IPR001714">
    <property type="entry name" value="Pept_M24_MAP"/>
</dbReference>
<dbReference type="InterPro" id="IPR002468">
    <property type="entry name" value="Pept_M24A_MAP2"/>
</dbReference>
<dbReference type="InterPro" id="IPR018349">
    <property type="entry name" value="Pept_M24A_MAP2_BS"/>
</dbReference>
<dbReference type="InterPro" id="IPR036388">
    <property type="entry name" value="WH-like_DNA-bd_sf"/>
</dbReference>
<dbReference type="InterPro" id="IPR036390">
    <property type="entry name" value="WH_DNA-bd_sf"/>
</dbReference>
<dbReference type="NCBIfam" id="TIGR00501">
    <property type="entry name" value="met_pdase_II"/>
    <property type="match status" value="1"/>
</dbReference>
<dbReference type="PANTHER" id="PTHR45777">
    <property type="entry name" value="METHIONINE AMINOPEPTIDASE 2"/>
    <property type="match status" value="1"/>
</dbReference>
<dbReference type="PANTHER" id="PTHR45777:SF2">
    <property type="entry name" value="METHIONINE AMINOPEPTIDASE 2"/>
    <property type="match status" value="1"/>
</dbReference>
<dbReference type="Pfam" id="PF00557">
    <property type="entry name" value="Peptidase_M24"/>
    <property type="match status" value="1"/>
</dbReference>
<dbReference type="PRINTS" id="PR00599">
    <property type="entry name" value="MAPEPTIDASE"/>
</dbReference>
<dbReference type="SUPFAM" id="SSF55920">
    <property type="entry name" value="Creatinase/aminopeptidase"/>
    <property type="match status" value="1"/>
</dbReference>
<dbReference type="SUPFAM" id="SSF46785">
    <property type="entry name" value="Winged helix' DNA-binding domain"/>
    <property type="match status" value="1"/>
</dbReference>
<dbReference type="PROSITE" id="PS01202">
    <property type="entry name" value="MAP_2"/>
    <property type="match status" value="1"/>
</dbReference>